<keyword id="KW-0028">Amino-acid biosynthesis</keyword>
<keyword id="KW-0032">Aminotransferase</keyword>
<keyword id="KW-0963">Cytoplasm</keyword>
<keyword id="KW-0663">Pyridoxal phosphate</keyword>
<keyword id="KW-0664">Pyridoxine biosynthesis</keyword>
<keyword id="KW-0718">Serine biosynthesis</keyword>
<keyword id="KW-0808">Transferase</keyword>
<evidence type="ECO:0000255" key="1">
    <source>
        <dbReference type="HAMAP-Rule" id="MF_00160"/>
    </source>
</evidence>
<reference key="1">
    <citation type="journal article" date="1997" name="Mol. Microbiol.">
        <title>Clonal descent and microevolution of Neisseria meningitidis during 30 years of epidemic spread.</title>
        <authorList>
            <person name="Morelli G."/>
            <person name="Malorny B."/>
            <person name="Mueller K."/>
            <person name="Seiler A."/>
            <person name="Wang J.-F."/>
            <person name="del Valle J."/>
            <person name="Achtman M."/>
        </authorList>
    </citation>
    <scope>NUCLEOTIDE SEQUENCE [GENOMIC DNA]</scope>
    <source>
        <strain>Various strains</strain>
    </source>
</reference>
<reference key="2">
    <citation type="journal article" date="2000" name="Nature">
        <title>Complete DNA sequence of a serogroup A strain of Neisseria meningitidis Z2491.</title>
        <authorList>
            <person name="Parkhill J."/>
            <person name="Achtman M."/>
            <person name="James K.D."/>
            <person name="Bentley S.D."/>
            <person name="Churcher C.M."/>
            <person name="Klee S.R."/>
            <person name="Morelli G."/>
            <person name="Basham D."/>
            <person name="Brown D."/>
            <person name="Chillingworth T."/>
            <person name="Davies R.M."/>
            <person name="Davis P."/>
            <person name="Devlin K."/>
            <person name="Feltwell T."/>
            <person name="Hamlin N."/>
            <person name="Holroyd S."/>
            <person name="Jagels K."/>
            <person name="Leather S."/>
            <person name="Moule S."/>
            <person name="Mungall K.L."/>
            <person name="Quail M.A."/>
            <person name="Rajandream M.A."/>
            <person name="Rutherford K.M."/>
            <person name="Simmonds M."/>
            <person name="Skelton J."/>
            <person name="Whitehead S."/>
            <person name="Spratt B.G."/>
            <person name="Barrell B.G."/>
        </authorList>
    </citation>
    <scope>NUCLEOTIDE SEQUENCE [LARGE SCALE GENOMIC DNA]</scope>
    <source>
        <strain>DSM 15465 / Z2491</strain>
    </source>
</reference>
<proteinExistence type="inferred from homology"/>
<gene>
    <name evidence="1" type="primary">serC</name>
    <name type="ordered locus">NMA1894</name>
</gene>
<organism>
    <name type="scientific">Neisseria meningitidis serogroup A / serotype 4A (strain DSM 15465 / Z2491)</name>
    <dbReference type="NCBI Taxonomy" id="122587"/>
    <lineage>
        <taxon>Bacteria</taxon>
        <taxon>Pseudomonadati</taxon>
        <taxon>Pseudomonadota</taxon>
        <taxon>Betaproteobacteria</taxon>
        <taxon>Neisseriales</taxon>
        <taxon>Neisseriaceae</taxon>
        <taxon>Neisseria</taxon>
    </lineage>
</organism>
<name>SERC_NEIMA</name>
<feature type="chain" id="PRO_0000150191" description="Phosphoserine aminotransferase">
    <location>
        <begin position="1"/>
        <end position="368"/>
    </location>
</feature>
<feature type="binding site" evidence="1">
    <location>
        <position position="44"/>
    </location>
    <ligand>
        <name>L-glutamate</name>
        <dbReference type="ChEBI" id="CHEBI:29985"/>
    </ligand>
</feature>
<feature type="binding site" evidence="1">
    <location>
        <begin position="78"/>
        <end position="79"/>
    </location>
    <ligand>
        <name>pyridoxal 5'-phosphate</name>
        <dbReference type="ChEBI" id="CHEBI:597326"/>
    </ligand>
</feature>
<feature type="binding site" evidence="1">
    <location>
        <position position="104"/>
    </location>
    <ligand>
        <name>pyridoxal 5'-phosphate</name>
        <dbReference type="ChEBI" id="CHEBI:597326"/>
    </ligand>
</feature>
<feature type="binding site" evidence="1">
    <location>
        <position position="157"/>
    </location>
    <ligand>
        <name>pyridoxal 5'-phosphate</name>
        <dbReference type="ChEBI" id="CHEBI:597326"/>
    </ligand>
</feature>
<feature type="binding site" evidence="1">
    <location>
        <position position="179"/>
    </location>
    <ligand>
        <name>pyridoxal 5'-phosphate</name>
        <dbReference type="ChEBI" id="CHEBI:597326"/>
    </ligand>
</feature>
<feature type="binding site" evidence="1">
    <location>
        <position position="202"/>
    </location>
    <ligand>
        <name>pyridoxal 5'-phosphate</name>
        <dbReference type="ChEBI" id="CHEBI:597326"/>
    </ligand>
</feature>
<feature type="binding site" evidence="1">
    <location>
        <begin position="244"/>
        <end position="245"/>
    </location>
    <ligand>
        <name>pyridoxal 5'-phosphate</name>
        <dbReference type="ChEBI" id="CHEBI:597326"/>
    </ligand>
</feature>
<feature type="modified residue" description="N6-(pyridoxal phosphate)lysine" evidence="1">
    <location>
        <position position="203"/>
    </location>
</feature>
<feature type="sequence variant" description="In strain: B293, Z3910 and Z3918.">
    <original>R</original>
    <variation>C</variation>
    <location>
        <position position="168"/>
    </location>
</feature>
<feature type="sequence variant" description="In strain: Z3524.">
    <original>A</original>
    <variation>S</variation>
    <location>
        <position position="192"/>
    </location>
</feature>
<feature type="sequence variant" description="In strain: B293, Z3524, Z3910, Z3915 and Z3918.">
    <original>I</original>
    <variation>L</variation>
    <location>
        <position position="237"/>
    </location>
</feature>
<feature type="sequence variant" description="In strain: Z3915 and Z3524.">
    <original>D</original>
    <variation>E</variation>
    <location>
        <position position="240"/>
    </location>
</feature>
<feature type="sequence variant" description="In strain: B293, Z3910 and Z3918.">
    <original>G</original>
    <variation>D</variation>
    <location>
        <position position="289"/>
    </location>
</feature>
<feature type="sequence variant" description="In strain: Z4296.">
    <original>T</original>
    <variation>S</variation>
    <location>
        <position position="336"/>
    </location>
</feature>
<accession>O34370</accession>
<accession>A1IT98</accession>
<accession>O33382</accession>
<accession>O33383</accession>
<accession>O33384</accession>
<accession>O33386</accession>
<protein>
    <recommendedName>
        <fullName evidence="1">Phosphoserine aminotransferase</fullName>
        <ecNumber evidence="1">2.6.1.52</ecNumber>
    </recommendedName>
    <alternativeName>
        <fullName evidence="1">Phosphohydroxythreonine aminotransferase</fullName>
        <shortName evidence="1">PSAT</shortName>
    </alternativeName>
</protein>
<dbReference type="EC" id="2.6.1.52" evidence="1"/>
<dbReference type="EMBL" id="AF004820">
    <property type="protein sequence ID" value="AAC32675.1"/>
    <property type="molecule type" value="Genomic_DNA"/>
</dbReference>
<dbReference type="EMBL" id="AF004821">
    <property type="protein sequence ID" value="AAC32679.1"/>
    <property type="molecule type" value="Genomic_DNA"/>
</dbReference>
<dbReference type="EMBL" id="AF004822">
    <property type="protein sequence ID" value="AAC32683.1"/>
    <property type="molecule type" value="Genomic_DNA"/>
</dbReference>
<dbReference type="EMBL" id="AF004823">
    <property type="protein sequence ID" value="AAC32687.1"/>
    <property type="molecule type" value="Genomic_DNA"/>
</dbReference>
<dbReference type="EMBL" id="AF004824">
    <property type="protein sequence ID" value="AAC32691.1"/>
    <property type="molecule type" value="Genomic_DNA"/>
</dbReference>
<dbReference type="EMBL" id="AF004825">
    <property type="protein sequence ID" value="AAC32695.1"/>
    <property type="molecule type" value="Genomic_DNA"/>
</dbReference>
<dbReference type="EMBL" id="AF004826">
    <property type="protein sequence ID" value="AAC32699.1"/>
    <property type="molecule type" value="Genomic_DNA"/>
</dbReference>
<dbReference type="EMBL" id="AL157959">
    <property type="protein sequence ID" value="CAM09011.1"/>
    <property type="molecule type" value="Genomic_DNA"/>
</dbReference>
<dbReference type="PIR" id="F81816">
    <property type="entry name" value="F81816"/>
</dbReference>
<dbReference type="RefSeq" id="WP_002249856.1">
    <property type="nucleotide sequence ID" value="NC_003116.1"/>
</dbReference>
<dbReference type="SMR" id="O34370"/>
<dbReference type="EnsemblBacteria" id="CAM09011">
    <property type="protein sequence ID" value="CAM09011"/>
    <property type="gene ID" value="NMA1894"/>
</dbReference>
<dbReference type="KEGG" id="nma:NMA1894"/>
<dbReference type="HOGENOM" id="CLU_034866_0_2_4"/>
<dbReference type="UniPathway" id="UPA00135">
    <property type="reaction ID" value="UER00197"/>
</dbReference>
<dbReference type="UniPathway" id="UPA00244">
    <property type="reaction ID" value="UER00311"/>
</dbReference>
<dbReference type="Proteomes" id="UP000000626">
    <property type="component" value="Chromosome"/>
</dbReference>
<dbReference type="GO" id="GO:0005737">
    <property type="term" value="C:cytoplasm"/>
    <property type="evidence" value="ECO:0007669"/>
    <property type="project" value="UniProtKB-SubCell"/>
</dbReference>
<dbReference type="GO" id="GO:0004648">
    <property type="term" value="F:O-phospho-L-serine:2-oxoglutarate aminotransferase activity"/>
    <property type="evidence" value="ECO:0007669"/>
    <property type="project" value="UniProtKB-UniRule"/>
</dbReference>
<dbReference type="GO" id="GO:0030170">
    <property type="term" value="F:pyridoxal phosphate binding"/>
    <property type="evidence" value="ECO:0007669"/>
    <property type="project" value="UniProtKB-UniRule"/>
</dbReference>
<dbReference type="GO" id="GO:0006564">
    <property type="term" value="P:L-serine biosynthetic process"/>
    <property type="evidence" value="ECO:0007669"/>
    <property type="project" value="UniProtKB-UniRule"/>
</dbReference>
<dbReference type="GO" id="GO:0008615">
    <property type="term" value="P:pyridoxine biosynthetic process"/>
    <property type="evidence" value="ECO:0007669"/>
    <property type="project" value="UniProtKB-UniRule"/>
</dbReference>
<dbReference type="CDD" id="cd00611">
    <property type="entry name" value="PSAT_like"/>
    <property type="match status" value="1"/>
</dbReference>
<dbReference type="FunFam" id="3.40.640.10:FF:000010">
    <property type="entry name" value="Phosphoserine aminotransferase"/>
    <property type="match status" value="1"/>
</dbReference>
<dbReference type="FunFam" id="3.90.1150.10:FF:000006">
    <property type="entry name" value="Phosphoserine aminotransferase"/>
    <property type="match status" value="1"/>
</dbReference>
<dbReference type="Gene3D" id="3.90.1150.10">
    <property type="entry name" value="Aspartate Aminotransferase, domain 1"/>
    <property type="match status" value="1"/>
</dbReference>
<dbReference type="Gene3D" id="3.40.640.10">
    <property type="entry name" value="Type I PLP-dependent aspartate aminotransferase-like (Major domain)"/>
    <property type="match status" value="1"/>
</dbReference>
<dbReference type="HAMAP" id="MF_00160">
    <property type="entry name" value="SerC_aminotrans_5"/>
    <property type="match status" value="1"/>
</dbReference>
<dbReference type="InterPro" id="IPR000192">
    <property type="entry name" value="Aminotrans_V_dom"/>
</dbReference>
<dbReference type="InterPro" id="IPR020578">
    <property type="entry name" value="Aminotrans_V_PyrdxlP_BS"/>
</dbReference>
<dbReference type="InterPro" id="IPR022278">
    <property type="entry name" value="Pser_aminoTfrase"/>
</dbReference>
<dbReference type="InterPro" id="IPR015424">
    <property type="entry name" value="PyrdxlP-dep_Trfase"/>
</dbReference>
<dbReference type="InterPro" id="IPR015421">
    <property type="entry name" value="PyrdxlP-dep_Trfase_major"/>
</dbReference>
<dbReference type="InterPro" id="IPR015422">
    <property type="entry name" value="PyrdxlP-dep_Trfase_small"/>
</dbReference>
<dbReference type="NCBIfam" id="NF003764">
    <property type="entry name" value="PRK05355.1"/>
    <property type="match status" value="1"/>
</dbReference>
<dbReference type="NCBIfam" id="TIGR01364">
    <property type="entry name" value="serC_1"/>
    <property type="match status" value="1"/>
</dbReference>
<dbReference type="PANTHER" id="PTHR43247">
    <property type="entry name" value="PHOSPHOSERINE AMINOTRANSFERASE"/>
    <property type="match status" value="1"/>
</dbReference>
<dbReference type="PANTHER" id="PTHR43247:SF1">
    <property type="entry name" value="PHOSPHOSERINE AMINOTRANSFERASE"/>
    <property type="match status" value="1"/>
</dbReference>
<dbReference type="Pfam" id="PF00266">
    <property type="entry name" value="Aminotran_5"/>
    <property type="match status" value="1"/>
</dbReference>
<dbReference type="PIRSF" id="PIRSF000525">
    <property type="entry name" value="SerC"/>
    <property type="match status" value="1"/>
</dbReference>
<dbReference type="SUPFAM" id="SSF53383">
    <property type="entry name" value="PLP-dependent transferases"/>
    <property type="match status" value="1"/>
</dbReference>
<dbReference type="PROSITE" id="PS00595">
    <property type="entry name" value="AA_TRANSFER_CLASS_5"/>
    <property type="match status" value="1"/>
</dbReference>
<sequence length="368" mass="41388">MSLYPIYNFSAGPAVLPEAVLETARQEMLDYNGTGFPVMAMSHRSEMFLSILHHAEQDLRQLLKVPDNYKILFLQGGATTQFNMAAMNLAHGFRTADAVVTGNWSRIAYEQMSRLTDTEIRLAAHGGEQFDYLDLPPVETWDVAPDSAFVHFAVNETVNGLQYREVPRLSEGMPPLVCDMSSEILSREFDVADYGLIYAGAQKNIGPAGVTVVIVREDLLERCPNDIPDVFNYRSHINRDGMYNTPSTYAIYMSGLVFRWLQAQGGVKKIEAVNRLKAQTLYETIDGSGGFYINRIRPNARSKMNVVFQTGDEELDRRFVLEAELQGLCLLKGYKTVGGMRASIYNAMPLEGVRALADFMRDFQRRYG</sequence>
<comment type="function">
    <text evidence="1">Catalyzes the reversible conversion of 3-phosphohydroxypyruvate to phosphoserine and of 3-hydroxy-2-oxo-4-phosphonooxybutanoate to phosphohydroxythreonine.</text>
</comment>
<comment type="catalytic activity">
    <reaction evidence="1">
        <text>O-phospho-L-serine + 2-oxoglutarate = 3-phosphooxypyruvate + L-glutamate</text>
        <dbReference type="Rhea" id="RHEA:14329"/>
        <dbReference type="ChEBI" id="CHEBI:16810"/>
        <dbReference type="ChEBI" id="CHEBI:18110"/>
        <dbReference type="ChEBI" id="CHEBI:29985"/>
        <dbReference type="ChEBI" id="CHEBI:57524"/>
        <dbReference type="EC" id="2.6.1.52"/>
    </reaction>
</comment>
<comment type="catalytic activity">
    <reaction evidence="1">
        <text>4-(phosphooxy)-L-threonine + 2-oxoglutarate = (R)-3-hydroxy-2-oxo-4-phosphooxybutanoate + L-glutamate</text>
        <dbReference type="Rhea" id="RHEA:16573"/>
        <dbReference type="ChEBI" id="CHEBI:16810"/>
        <dbReference type="ChEBI" id="CHEBI:29985"/>
        <dbReference type="ChEBI" id="CHEBI:58452"/>
        <dbReference type="ChEBI" id="CHEBI:58538"/>
        <dbReference type="EC" id="2.6.1.52"/>
    </reaction>
</comment>
<comment type="cofactor">
    <cofactor evidence="1">
        <name>pyridoxal 5'-phosphate</name>
        <dbReference type="ChEBI" id="CHEBI:597326"/>
    </cofactor>
    <text evidence="1">Binds 1 pyridoxal phosphate per subunit.</text>
</comment>
<comment type="pathway">
    <text evidence="1">Amino-acid biosynthesis; L-serine biosynthesis; L-serine from 3-phospho-D-glycerate: step 2/3.</text>
</comment>
<comment type="pathway">
    <text evidence="1">Cofactor biosynthesis; pyridoxine 5'-phosphate biosynthesis; pyridoxine 5'-phosphate from D-erythrose 4-phosphate: step 3/5.</text>
</comment>
<comment type="subunit">
    <text evidence="1">Homodimer.</text>
</comment>
<comment type="subcellular location">
    <subcellularLocation>
        <location evidence="1">Cytoplasm</location>
    </subcellularLocation>
</comment>
<comment type="similarity">
    <text evidence="1">Belongs to the class-V pyridoxal-phosphate-dependent aminotransferase family. SerC subfamily.</text>
</comment>